<proteinExistence type="inferred from homology"/>
<dbReference type="EMBL" id="CP000930">
    <property type="protein sequence ID" value="ABZ83825.1"/>
    <property type="molecule type" value="Genomic_DNA"/>
</dbReference>
<dbReference type="RefSeq" id="WP_012282344.1">
    <property type="nucleotide sequence ID" value="NC_010337.2"/>
</dbReference>
<dbReference type="SMR" id="B0TB98"/>
<dbReference type="KEGG" id="hmo:HM1_0730"/>
<dbReference type="eggNOG" id="COG2088">
    <property type="taxonomic scope" value="Bacteria"/>
</dbReference>
<dbReference type="HOGENOM" id="CLU_103669_2_0_9"/>
<dbReference type="OrthoDB" id="9796286at2"/>
<dbReference type="Proteomes" id="UP000008550">
    <property type="component" value="Chromosome"/>
</dbReference>
<dbReference type="GO" id="GO:0000917">
    <property type="term" value="P:division septum assembly"/>
    <property type="evidence" value="ECO:0007669"/>
    <property type="project" value="UniProtKB-KW"/>
</dbReference>
<dbReference type="GO" id="GO:0030435">
    <property type="term" value="P:sporulation resulting in formation of a cellular spore"/>
    <property type="evidence" value="ECO:0007669"/>
    <property type="project" value="InterPro"/>
</dbReference>
<dbReference type="Gene3D" id="3.30.1120.40">
    <property type="entry name" value="Stage V sporulation protein G"/>
    <property type="match status" value="1"/>
</dbReference>
<dbReference type="HAMAP" id="MF_00819">
    <property type="entry name" value="SpoVG"/>
    <property type="match status" value="1"/>
</dbReference>
<dbReference type="InterPro" id="IPR007170">
    <property type="entry name" value="SpoVG"/>
</dbReference>
<dbReference type="InterPro" id="IPR036751">
    <property type="entry name" value="SpoVG_sf"/>
</dbReference>
<dbReference type="NCBIfam" id="NF009749">
    <property type="entry name" value="PRK13259.1"/>
    <property type="match status" value="1"/>
</dbReference>
<dbReference type="PANTHER" id="PTHR38429">
    <property type="entry name" value="SEPTATION PROTEIN SPOVG-RELATED"/>
    <property type="match status" value="1"/>
</dbReference>
<dbReference type="PANTHER" id="PTHR38429:SF1">
    <property type="entry name" value="SEPTATION PROTEIN SPOVG-RELATED"/>
    <property type="match status" value="1"/>
</dbReference>
<dbReference type="Pfam" id="PF04026">
    <property type="entry name" value="SpoVG"/>
    <property type="match status" value="1"/>
</dbReference>
<dbReference type="SUPFAM" id="SSF160537">
    <property type="entry name" value="SpoVG-like"/>
    <property type="match status" value="1"/>
</dbReference>
<comment type="function">
    <text evidence="1">Could be involved in septation.</text>
</comment>
<comment type="similarity">
    <text evidence="1">Belongs to the SpoVG family.</text>
</comment>
<protein>
    <recommendedName>
        <fullName evidence="1">Putative septation protein SpoVG</fullName>
    </recommendedName>
</protein>
<name>SP5G_HELMI</name>
<evidence type="ECO:0000255" key="1">
    <source>
        <dbReference type="HAMAP-Rule" id="MF_00819"/>
    </source>
</evidence>
<organism>
    <name type="scientific">Heliobacterium modesticaldum (strain ATCC 51547 / Ice1)</name>
    <dbReference type="NCBI Taxonomy" id="498761"/>
    <lineage>
        <taxon>Bacteria</taxon>
        <taxon>Bacillati</taxon>
        <taxon>Bacillota</taxon>
        <taxon>Clostridia</taxon>
        <taxon>Eubacteriales</taxon>
        <taxon>Heliobacteriaceae</taxon>
        <taxon>Heliomicrobium</taxon>
    </lineage>
</organism>
<reference key="1">
    <citation type="journal article" date="2008" name="J. Bacteriol.">
        <title>The genome of Heliobacterium modesticaldum, a phototrophic representative of the Firmicutes containing the simplest photosynthetic apparatus.</title>
        <authorList>
            <person name="Sattley W.M."/>
            <person name="Madigan M.T."/>
            <person name="Swingley W.D."/>
            <person name="Cheung P.C."/>
            <person name="Clocksin K.M."/>
            <person name="Conrad A.L."/>
            <person name="Dejesa L.C."/>
            <person name="Honchak B.M."/>
            <person name="Jung D.O."/>
            <person name="Karbach L.E."/>
            <person name="Kurdoglu A."/>
            <person name="Lahiri S."/>
            <person name="Mastrian S.D."/>
            <person name="Page L.E."/>
            <person name="Taylor H.L."/>
            <person name="Wang Z.T."/>
            <person name="Raymond J."/>
            <person name="Chen M."/>
            <person name="Blankenship R.E."/>
            <person name="Touchman J.W."/>
        </authorList>
    </citation>
    <scope>NUCLEOTIDE SEQUENCE [LARGE SCALE GENOMIC DNA]</scope>
    <source>
        <strain>ATCC 51547 / Ice1</strain>
    </source>
</reference>
<sequence length="89" mass="9754">MTITDVRVRKVNLEGKMKAIVSVTFDNAFVVHDVKVVEGQKGLFVAMPSRRTPEGEYRDIAHPISAKAREQISVAVLNAYQEALASAIA</sequence>
<keyword id="KW-0131">Cell cycle</keyword>
<keyword id="KW-0132">Cell division</keyword>
<keyword id="KW-1185">Reference proteome</keyword>
<keyword id="KW-0717">Septation</keyword>
<accession>B0TB98</accession>
<feature type="chain" id="PRO_1000196503" description="Putative septation protein SpoVG">
    <location>
        <begin position="1"/>
        <end position="89"/>
    </location>
</feature>
<gene>
    <name evidence="1" type="primary">spoVG</name>
    <name type="ordered locus">Helmi_12000</name>
    <name type="ORF">HM1_0730</name>
</gene>